<proteinExistence type="inferred from homology"/>
<keyword id="KW-0998">Cell outer membrane</keyword>
<keyword id="KW-0449">Lipoprotein</keyword>
<keyword id="KW-0472">Membrane</keyword>
<keyword id="KW-0564">Palmitate</keyword>
<keyword id="KW-0614">Plasmid</keyword>
<keyword id="KW-0732">Signal</keyword>
<geneLocation type="plasmid" evidence="4"/>
<accession>P70903</accession>
<sequence>MRKRISAIIMTLFMVLVSCNSGGVAEDPQSKFLKSVIDLGNDFLNVFTSFGDIVSKVLGFSTETKKSDVGAYFKTIQDTIQGTKDKLNKIVTDMKREGNPNASATETAVKTLIDNTLDKIIEGAKTVSDAIGDASDPIANVAAQNAAGAAGTEVDKLVKGIKTIVDVVLKGVGSANAGDDKKAEDGNTARTAAAGDGEAGKLFTAGAGAAGDANNAKKVAADAAKAVGAVTGADILQAMIKDNGDAAKLATAQNAGAAPKDGAIAGGIALRVMAKGGKFAGPSAAADDAVTAIKGAAISAITKALDTLTIAIRKTIDAGLKTVKEAMKINANDTPISPEQNTPKATTNN</sequence>
<evidence type="ECO:0000250" key="1">
    <source>
        <dbReference type="UniProtKB" id="P21875"/>
    </source>
</evidence>
<evidence type="ECO:0000255" key="2"/>
<evidence type="ECO:0000255" key="3">
    <source>
        <dbReference type="PROSITE-ProRule" id="PRU00303"/>
    </source>
</evidence>
<evidence type="ECO:0000269" key="4">
    <source>
    </source>
</evidence>
<evidence type="ECO:0000303" key="5">
    <source>
    </source>
</evidence>
<evidence type="ECO:0000303" key="6">
    <source ref="1"/>
</evidence>
<evidence type="ECO:0000305" key="7"/>
<evidence type="ECO:0000305" key="8">
    <source>
    </source>
</evidence>
<evidence type="ECO:0000312" key="9">
    <source>
        <dbReference type="EMBL" id="AAB17736.1"/>
    </source>
</evidence>
<comment type="function">
    <text evidence="1">The Vlp and Vsp proteins are antigenically distinct proteins, only one vlp or vsp gene is transcriptionally active at any one time. Switching between these genes is a mechanism of host immune response evasion.</text>
</comment>
<comment type="subcellular location">
    <subcellularLocation>
        <location evidence="1">Cell outer membrane</location>
        <topology>Lipid-anchor</topology>
    </subcellularLocation>
</comment>
<comment type="miscellaneous">
    <text evidence="8">Genes for both Vlp and Vsp families are on (usually) unnamed linear plasmids in B.hermsii HS1.</text>
</comment>
<comment type="similarity">
    <text evidence="4">Belongs to the variable large protein (Vlp) family. Gamma subfamily.</text>
</comment>
<name>VLP19_BORHE</name>
<organism>
    <name type="scientific">Borrelia hermsii</name>
    <dbReference type="NCBI Taxonomy" id="140"/>
    <lineage>
        <taxon>Bacteria</taxon>
        <taxon>Pseudomonadati</taxon>
        <taxon>Spirochaetota</taxon>
        <taxon>Spirochaetia</taxon>
        <taxon>Spirochaetales</taxon>
        <taxon>Borreliaceae</taxon>
        <taxon>Borrelia</taxon>
    </lineage>
</organism>
<protein>
    <recommendedName>
        <fullName evidence="5">Variable large protein 19</fullName>
    </recommendedName>
</protein>
<gene>
    <name evidence="5" type="primary">vlp19</name>
    <name evidence="6" type="synonym">vmp19</name>
</gene>
<reference evidence="9" key="1">
    <citation type="submission" date="1996-03" db="EMBL/GenBank/DDBJ databases">
        <authorList>
            <person name="Restrepo B.I."/>
            <person name="Carter C.J."/>
            <person name="Infante D."/>
            <person name="Barbour A.G."/>
        </authorList>
    </citation>
    <scope>NUCLEOTIDE SEQUENCE [GENOMIC DNA]</scope>
    <source>
        <strain>ATCC 35209 / HS1</strain>
    </source>
</reference>
<reference evidence="7" key="2">
    <citation type="journal article" date="1998" name="Infect. Immun.">
        <title>Population structure of the relapsing fever spirochete Borrelia hermsii as indicated by polymorphism of two multigene families that encode immunogenic outer surface lipoproteins.</title>
        <authorList>
            <person name="Hinnebusch B.J."/>
            <person name="Barbour A.G."/>
            <person name="Restrepo B.I."/>
            <person name="Schwan T.G."/>
        </authorList>
    </citation>
    <scope>NOMENCLATURE</scope>
</reference>
<feature type="signal peptide" evidence="3">
    <location>
        <begin position="1"/>
        <end position="18"/>
    </location>
</feature>
<feature type="chain" id="PRO_0000244507" description="Variable large protein 19" evidence="2">
    <location>
        <begin position="19"/>
        <end position="349" status="greater than"/>
    </location>
</feature>
<feature type="lipid moiety-binding region" description="N-palmitoyl cysteine" evidence="2 7">
    <location>
        <position position="19"/>
    </location>
</feature>
<feature type="lipid moiety-binding region" description="S-diacylglycerol cysteine" evidence="2 7">
    <location>
        <position position="19"/>
    </location>
</feature>
<feature type="non-terminal residue" evidence="9">
    <location>
        <position position="349"/>
    </location>
</feature>
<dbReference type="EMBL" id="U52040">
    <property type="protein sequence ID" value="AAB17736.1"/>
    <property type="molecule type" value="Genomic_DNA"/>
</dbReference>
<dbReference type="SMR" id="P70903"/>
<dbReference type="GO" id="GO:0009279">
    <property type="term" value="C:cell outer membrane"/>
    <property type="evidence" value="ECO:0007669"/>
    <property type="project" value="UniProtKB-SubCell"/>
</dbReference>
<dbReference type="InterPro" id="IPR000680">
    <property type="entry name" value="Borrelia_lipo"/>
</dbReference>
<dbReference type="Pfam" id="PF00921">
    <property type="entry name" value="Lipoprotein_2"/>
    <property type="match status" value="1"/>
</dbReference>
<dbReference type="SUPFAM" id="SSF74748">
    <property type="entry name" value="Variable surface antigen VlsE"/>
    <property type="match status" value="1"/>
</dbReference>
<dbReference type="PROSITE" id="PS51257">
    <property type="entry name" value="PROKAR_LIPOPROTEIN"/>
    <property type="match status" value="1"/>
</dbReference>